<gene>
    <name evidence="1" type="primary">frdD</name>
    <name type="ordered locus">CKO_03681</name>
</gene>
<proteinExistence type="inferred from homology"/>
<keyword id="KW-0997">Cell inner membrane</keyword>
<keyword id="KW-1003">Cell membrane</keyword>
<keyword id="KW-0472">Membrane</keyword>
<keyword id="KW-1185">Reference proteome</keyword>
<keyword id="KW-0812">Transmembrane</keyword>
<keyword id="KW-1133">Transmembrane helix</keyword>
<organism>
    <name type="scientific">Citrobacter koseri (strain ATCC BAA-895 / CDC 4225-83 / SGSC4696)</name>
    <dbReference type="NCBI Taxonomy" id="290338"/>
    <lineage>
        <taxon>Bacteria</taxon>
        <taxon>Pseudomonadati</taxon>
        <taxon>Pseudomonadota</taxon>
        <taxon>Gammaproteobacteria</taxon>
        <taxon>Enterobacterales</taxon>
        <taxon>Enterobacteriaceae</taxon>
        <taxon>Citrobacter</taxon>
    </lineage>
</organism>
<feature type="chain" id="PRO_1000045544" description="Fumarate reductase subunit D">
    <location>
        <begin position="1"/>
        <end position="119"/>
    </location>
</feature>
<feature type="transmembrane region" description="Helical" evidence="1">
    <location>
        <begin position="25"/>
        <end position="45"/>
    </location>
</feature>
<feature type="transmembrane region" description="Helical" evidence="1">
    <location>
        <begin position="55"/>
        <end position="75"/>
    </location>
</feature>
<feature type="transmembrane region" description="Helical" evidence="1">
    <location>
        <begin position="99"/>
        <end position="119"/>
    </location>
</feature>
<name>FRDD_CITK8</name>
<reference key="1">
    <citation type="submission" date="2007-08" db="EMBL/GenBank/DDBJ databases">
        <authorList>
            <consortium name="The Citrobacter koseri Genome Sequencing Project"/>
            <person name="McClelland M."/>
            <person name="Sanderson E.K."/>
            <person name="Porwollik S."/>
            <person name="Spieth J."/>
            <person name="Clifton W.S."/>
            <person name="Latreille P."/>
            <person name="Courtney L."/>
            <person name="Wang C."/>
            <person name="Pepin K."/>
            <person name="Bhonagiri V."/>
            <person name="Nash W."/>
            <person name="Johnson M."/>
            <person name="Thiruvilangam P."/>
            <person name="Wilson R."/>
        </authorList>
    </citation>
    <scope>NUCLEOTIDE SEQUENCE [LARGE SCALE GENOMIC DNA]</scope>
    <source>
        <strain>ATCC BAA-895 / CDC 4225-83 / SGSC4696</strain>
    </source>
</reference>
<dbReference type="EMBL" id="CP000822">
    <property type="protein sequence ID" value="ABV14758.1"/>
    <property type="molecule type" value="Genomic_DNA"/>
</dbReference>
<dbReference type="RefSeq" id="WP_012134455.1">
    <property type="nucleotide sequence ID" value="NC_009792.1"/>
</dbReference>
<dbReference type="SMR" id="A8AMP5"/>
<dbReference type="STRING" id="290338.CKO_03681"/>
<dbReference type="GeneID" id="45137385"/>
<dbReference type="KEGG" id="cko:CKO_03681"/>
<dbReference type="HOGENOM" id="CLU_168367_0_0_6"/>
<dbReference type="OrthoDB" id="9804636at2"/>
<dbReference type="Proteomes" id="UP000008148">
    <property type="component" value="Chromosome"/>
</dbReference>
<dbReference type="GO" id="GO:0045283">
    <property type="term" value="C:fumarate reductase complex"/>
    <property type="evidence" value="ECO:0007669"/>
    <property type="project" value="UniProtKB-UniRule"/>
</dbReference>
<dbReference type="GO" id="GO:0005886">
    <property type="term" value="C:plasma membrane"/>
    <property type="evidence" value="ECO:0007669"/>
    <property type="project" value="UniProtKB-SubCell"/>
</dbReference>
<dbReference type="GO" id="GO:0000104">
    <property type="term" value="F:succinate dehydrogenase activity"/>
    <property type="evidence" value="ECO:0007669"/>
    <property type="project" value="UniProtKB-UniRule"/>
</dbReference>
<dbReference type="GO" id="GO:0006106">
    <property type="term" value="P:fumarate metabolic process"/>
    <property type="evidence" value="ECO:0007669"/>
    <property type="project" value="InterPro"/>
</dbReference>
<dbReference type="CDD" id="cd00547">
    <property type="entry name" value="QFR_TypeD_subunitD"/>
    <property type="match status" value="1"/>
</dbReference>
<dbReference type="FunFam" id="1.20.1300.10:FF:000002">
    <property type="entry name" value="Fumarate reductase subunit D"/>
    <property type="match status" value="1"/>
</dbReference>
<dbReference type="Gene3D" id="1.20.1300.10">
    <property type="entry name" value="Fumarate reductase/succinate dehydrogenase, transmembrane subunit"/>
    <property type="match status" value="1"/>
</dbReference>
<dbReference type="HAMAP" id="MF_00709">
    <property type="entry name" value="Fumarate_red_D"/>
    <property type="match status" value="1"/>
</dbReference>
<dbReference type="InterPro" id="IPR003418">
    <property type="entry name" value="Fumarate_red_D"/>
</dbReference>
<dbReference type="InterPro" id="IPR034804">
    <property type="entry name" value="SQR/QFR_C/D"/>
</dbReference>
<dbReference type="NCBIfam" id="NF003977">
    <property type="entry name" value="PRK05470.1-1"/>
    <property type="match status" value="1"/>
</dbReference>
<dbReference type="Pfam" id="PF02313">
    <property type="entry name" value="Fumarate_red_D"/>
    <property type="match status" value="1"/>
</dbReference>
<dbReference type="PIRSF" id="PIRSF000179">
    <property type="entry name" value="FrdD"/>
    <property type="match status" value="1"/>
</dbReference>
<dbReference type="SUPFAM" id="SSF81343">
    <property type="entry name" value="Fumarate reductase respiratory complex transmembrane subunits"/>
    <property type="match status" value="1"/>
</dbReference>
<comment type="function">
    <text evidence="1">Two distinct, membrane-bound, FAD-containing enzymes are responsible for the catalysis of fumarate and succinate interconversion; fumarate reductase is used in anaerobic growth, and succinate dehydrogenase is used in aerobic growth. Anchors the catalytic components of the fumarate reductase complex to the cell inner membrane, binds quinones.</text>
</comment>
<comment type="subunit">
    <text evidence="1">Part of an enzyme complex containing four subunits: a flavoprotein (FrdA), an iron-sulfur protein (FrdB), and two hydrophobic anchor proteins (FrdC and FrdD).</text>
</comment>
<comment type="subcellular location">
    <subcellularLocation>
        <location evidence="1">Cell inner membrane</location>
        <topology evidence="1">Multi-pass membrane protein</topology>
    </subcellularLocation>
</comment>
<comment type="similarity">
    <text evidence="1">Belongs to the FrdD family.</text>
</comment>
<protein>
    <recommendedName>
        <fullName evidence="1">Fumarate reductase subunit D</fullName>
    </recommendedName>
    <alternativeName>
        <fullName evidence="1">Fumarate reductase 13 kDa hydrophobic protein</fullName>
    </alternativeName>
    <alternativeName>
        <fullName evidence="1">Quinol-fumarate reductase subunit D</fullName>
        <shortName evidence="1">QFR subunit D</shortName>
    </alternativeName>
</protein>
<accession>A8AMP5</accession>
<sequence>MINPNPKRSDEPVFWGLFGAGGMWGAIIAPVMVLLVGILLPLGLFPGDALSYERVLAFAQSFIGRAFLFLMIVLPLWCGLHRMHHAMHDLKIHVPSGKWVFYGLAAILTVVTAIGILTI</sequence>
<evidence type="ECO:0000255" key="1">
    <source>
        <dbReference type="HAMAP-Rule" id="MF_00709"/>
    </source>
</evidence>